<sequence length="155" mass="17007">MTDQQAPVFQIQRVYLKEASLEQPNSPAILLEQESPTVDIQLGVNAAPVAEGVFEVTVTATVQTKIKDKTVFLVEATQAGIFEIRNLPQEQMNQIMGIACPQIVYPYLRGNVADLVQRGGFPPVHLSEINFQAMFEQQQQQQAGAGADAPQLVTQ</sequence>
<keyword id="KW-0143">Chaperone</keyword>
<keyword id="KW-0963">Cytoplasm</keyword>
<keyword id="KW-0653">Protein transport</keyword>
<keyword id="KW-1185">Reference proteome</keyword>
<keyword id="KW-0811">Translocation</keyword>
<keyword id="KW-0813">Transport</keyword>
<protein>
    <recommendedName>
        <fullName evidence="1">Protein-export protein SecB</fullName>
    </recommendedName>
</protein>
<name>SECB_ALBFT</name>
<proteinExistence type="inferred from homology"/>
<organism>
    <name type="scientific">Albidiferax ferrireducens (strain ATCC BAA-621 / DSM 15236 / T118)</name>
    <name type="common">Rhodoferax ferrireducens</name>
    <dbReference type="NCBI Taxonomy" id="338969"/>
    <lineage>
        <taxon>Bacteria</taxon>
        <taxon>Pseudomonadati</taxon>
        <taxon>Pseudomonadota</taxon>
        <taxon>Betaproteobacteria</taxon>
        <taxon>Burkholderiales</taxon>
        <taxon>Comamonadaceae</taxon>
        <taxon>Rhodoferax</taxon>
    </lineage>
</organism>
<comment type="function">
    <text evidence="1">One of the proteins required for the normal export of preproteins out of the cell cytoplasm. It is a molecular chaperone that binds to a subset of precursor proteins, maintaining them in a translocation-competent state. It also specifically binds to its receptor SecA.</text>
</comment>
<comment type="subunit">
    <text evidence="1">Homotetramer, a dimer of dimers. One homotetramer interacts with 1 SecA dimer.</text>
</comment>
<comment type="subcellular location">
    <subcellularLocation>
        <location evidence="1">Cytoplasm</location>
    </subcellularLocation>
</comment>
<comment type="similarity">
    <text evidence="1">Belongs to the SecB family.</text>
</comment>
<feature type="chain" id="PRO_0000318260" description="Protein-export protein SecB">
    <location>
        <begin position="1"/>
        <end position="155"/>
    </location>
</feature>
<evidence type="ECO:0000255" key="1">
    <source>
        <dbReference type="HAMAP-Rule" id="MF_00821"/>
    </source>
</evidence>
<gene>
    <name evidence="1" type="primary">secB</name>
    <name type="ordered locus">Rfer_1312</name>
</gene>
<reference key="1">
    <citation type="submission" date="2006-02" db="EMBL/GenBank/DDBJ databases">
        <title>Complete sequence of chromosome of Rhodoferax ferrireducens DSM 15236.</title>
        <authorList>
            <person name="Copeland A."/>
            <person name="Lucas S."/>
            <person name="Lapidus A."/>
            <person name="Barry K."/>
            <person name="Detter J.C."/>
            <person name="Glavina del Rio T."/>
            <person name="Hammon N."/>
            <person name="Israni S."/>
            <person name="Pitluck S."/>
            <person name="Brettin T."/>
            <person name="Bruce D."/>
            <person name="Han C."/>
            <person name="Tapia R."/>
            <person name="Gilna P."/>
            <person name="Kiss H."/>
            <person name="Schmutz J."/>
            <person name="Larimer F."/>
            <person name="Land M."/>
            <person name="Kyrpides N."/>
            <person name="Ivanova N."/>
            <person name="Richardson P."/>
        </authorList>
    </citation>
    <scope>NUCLEOTIDE SEQUENCE [LARGE SCALE GENOMIC DNA]</scope>
    <source>
        <strain>ATCC BAA-621 / DSM 15236 / T118</strain>
    </source>
</reference>
<dbReference type="EMBL" id="CP000267">
    <property type="protein sequence ID" value="ABD69046.1"/>
    <property type="molecule type" value="Genomic_DNA"/>
</dbReference>
<dbReference type="RefSeq" id="WP_011463614.1">
    <property type="nucleotide sequence ID" value="NC_007908.1"/>
</dbReference>
<dbReference type="SMR" id="Q21YV7"/>
<dbReference type="STRING" id="338969.Rfer_1312"/>
<dbReference type="KEGG" id="rfr:Rfer_1312"/>
<dbReference type="eggNOG" id="COG1952">
    <property type="taxonomic scope" value="Bacteria"/>
</dbReference>
<dbReference type="HOGENOM" id="CLU_111574_1_0_4"/>
<dbReference type="OrthoDB" id="9795145at2"/>
<dbReference type="Proteomes" id="UP000008332">
    <property type="component" value="Chromosome"/>
</dbReference>
<dbReference type="GO" id="GO:0005737">
    <property type="term" value="C:cytoplasm"/>
    <property type="evidence" value="ECO:0007669"/>
    <property type="project" value="UniProtKB-SubCell"/>
</dbReference>
<dbReference type="GO" id="GO:0051082">
    <property type="term" value="F:unfolded protein binding"/>
    <property type="evidence" value="ECO:0007669"/>
    <property type="project" value="InterPro"/>
</dbReference>
<dbReference type="GO" id="GO:0006457">
    <property type="term" value="P:protein folding"/>
    <property type="evidence" value="ECO:0007669"/>
    <property type="project" value="UniProtKB-UniRule"/>
</dbReference>
<dbReference type="GO" id="GO:0051262">
    <property type="term" value="P:protein tetramerization"/>
    <property type="evidence" value="ECO:0007669"/>
    <property type="project" value="InterPro"/>
</dbReference>
<dbReference type="GO" id="GO:0015031">
    <property type="term" value="P:protein transport"/>
    <property type="evidence" value="ECO:0007669"/>
    <property type="project" value="UniProtKB-UniRule"/>
</dbReference>
<dbReference type="Gene3D" id="3.10.420.10">
    <property type="entry name" value="SecB-like"/>
    <property type="match status" value="1"/>
</dbReference>
<dbReference type="HAMAP" id="MF_00821">
    <property type="entry name" value="SecB"/>
    <property type="match status" value="1"/>
</dbReference>
<dbReference type="InterPro" id="IPR003708">
    <property type="entry name" value="SecB"/>
</dbReference>
<dbReference type="InterPro" id="IPR035958">
    <property type="entry name" value="SecB-like_sf"/>
</dbReference>
<dbReference type="NCBIfam" id="NF004394">
    <property type="entry name" value="PRK05751.1-5"/>
    <property type="match status" value="1"/>
</dbReference>
<dbReference type="NCBIfam" id="TIGR00809">
    <property type="entry name" value="secB"/>
    <property type="match status" value="1"/>
</dbReference>
<dbReference type="PANTHER" id="PTHR36918">
    <property type="match status" value="1"/>
</dbReference>
<dbReference type="PANTHER" id="PTHR36918:SF1">
    <property type="entry name" value="PROTEIN-EXPORT PROTEIN SECB"/>
    <property type="match status" value="1"/>
</dbReference>
<dbReference type="Pfam" id="PF02556">
    <property type="entry name" value="SecB"/>
    <property type="match status" value="1"/>
</dbReference>
<dbReference type="PRINTS" id="PR01594">
    <property type="entry name" value="SECBCHAPRONE"/>
</dbReference>
<dbReference type="SUPFAM" id="SSF54611">
    <property type="entry name" value="SecB-like"/>
    <property type="match status" value="1"/>
</dbReference>
<accession>Q21YV7</accession>